<accession>P9WFE7</accession>
<accession>L0TAS5</accession>
<accession>P0A676</accession>
<accession>P50043</accession>
<feature type="chain" id="PRO_0000098019" description="Urease subunit gamma">
    <location>
        <begin position="1"/>
        <end position="100"/>
    </location>
</feature>
<feature type="sequence conflict" description="In Ref. 2; AAC37005." evidence="3" ref="2">
    <original>E</original>
    <variation>V</variation>
    <location>
        <position position="75"/>
    </location>
</feature>
<feature type="helix" evidence="4">
    <location>
        <begin position="5"/>
        <end position="25"/>
    </location>
</feature>
<feature type="helix" evidence="4">
    <location>
        <begin position="32"/>
        <end position="49"/>
    </location>
</feature>
<feature type="helix" evidence="4">
    <location>
        <begin position="53"/>
        <end position="59"/>
    </location>
</feature>
<feature type="strand" evidence="4">
    <location>
        <begin position="62"/>
        <end position="64"/>
    </location>
</feature>
<feature type="helix" evidence="4">
    <location>
        <begin position="66"/>
        <end position="68"/>
    </location>
</feature>
<feature type="helix" evidence="4">
    <location>
        <begin position="73"/>
        <end position="76"/>
    </location>
</feature>
<feature type="strand" evidence="4">
    <location>
        <begin position="78"/>
        <end position="86"/>
    </location>
</feature>
<feature type="strand" evidence="4">
    <location>
        <begin position="89"/>
        <end position="98"/>
    </location>
</feature>
<name>URE3_MYCTU</name>
<proteinExistence type="evidence at protein level"/>
<protein>
    <recommendedName>
        <fullName evidence="1">Urease subunit gamma</fullName>
        <ecNumber evidence="1">3.5.1.5</ecNumber>
    </recommendedName>
    <alternativeName>
        <fullName evidence="1">Urea amidohydrolase subunit gamma</fullName>
    </alternativeName>
</protein>
<keyword id="KW-0002">3D-structure</keyword>
<keyword id="KW-0963">Cytoplasm</keyword>
<keyword id="KW-0903">Direct protein sequencing</keyword>
<keyword id="KW-0378">Hydrolase</keyword>
<keyword id="KW-1185">Reference proteome</keyword>
<evidence type="ECO:0000255" key="1">
    <source>
        <dbReference type="HAMAP-Rule" id="MF_00739"/>
    </source>
</evidence>
<evidence type="ECO:0000269" key="2">
    <source>
    </source>
</evidence>
<evidence type="ECO:0000305" key="3"/>
<evidence type="ECO:0007829" key="4">
    <source>
        <dbReference type="PDB" id="2FVH"/>
    </source>
</evidence>
<reference key="1">
    <citation type="journal article" date="1995" name="J. Bacteriol.">
        <title>Purification, characterization, and genetic analysis of Mycobacterium tuberculosis urease, a potentially critical determinant of host-pathogen interaction.</title>
        <authorList>
            <person name="Clemens D.L."/>
            <person name="Lee B.-Y."/>
            <person name="Horwitz M.A."/>
        </authorList>
    </citation>
    <scope>NUCLEOTIDE SEQUENCE [GENOMIC DNA]</scope>
    <scope>PROTEIN SEQUENCE OF 1-5</scope>
    <scope>CATALYTIC ACTIVITY</scope>
    <scope>INTERACTION WITH UREB AND UREC</scope>
    <scope>BIOPHYSICOCHEMICAL PROPERTIES</scope>
    <source>
        <strain>ATCC 35801 / TMC 107 / Erdman</strain>
    </source>
</reference>
<reference key="2">
    <citation type="journal article" date="1995" name="Proc. Natl. Acad. Sci. U.S.A.">
        <title>The urease locus of Mycobacterium tuberculosis and its utilization for the demonstration of allelic exchange in Mycobacterium bovis bacillus Calmette-Guerin.</title>
        <authorList>
            <person name="Reyrat J.-M."/>
            <person name="Berthet F.-X."/>
            <person name="Gicquel B."/>
        </authorList>
    </citation>
    <scope>NUCLEOTIDE SEQUENCE [GENOMIC DNA]</scope>
    <source>
        <strain>ATCC 25618 / H37Rv</strain>
    </source>
</reference>
<reference key="3">
    <citation type="journal article" date="1998" name="Nature">
        <title>Deciphering the biology of Mycobacterium tuberculosis from the complete genome sequence.</title>
        <authorList>
            <person name="Cole S.T."/>
            <person name="Brosch R."/>
            <person name="Parkhill J."/>
            <person name="Garnier T."/>
            <person name="Churcher C.M."/>
            <person name="Harris D.E."/>
            <person name="Gordon S.V."/>
            <person name="Eiglmeier K."/>
            <person name="Gas S."/>
            <person name="Barry C.E. III"/>
            <person name="Tekaia F."/>
            <person name="Badcock K."/>
            <person name="Basham D."/>
            <person name="Brown D."/>
            <person name="Chillingworth T."/>
            <person name="Connor R."/>
            <person name="Davies R.M."/>
            <person name="Devlin K."/>
            <person name="Feltwell T."/>
            <person name="Gentles S."/>
            <person name="Hamlin N."/>
            <person name="Holroyd S."/>
            <person name="Hornsby T."/>
            <person name="Jagels K."/>
            <person name="Krogh A."/>
            <person name="McLean J."/>
            <person name="Moule S."/>
            <person name="Murphy L.D."/>
            <person name="Oliver S."/>
            <person name="Osborne J."/>
            <person name="Quail M.A."/>
            <person name="Rajandream M.A."/>
            <person name="Rogers J."/>
            <person name="Rutter S."/>
            <person name="Seeger K."/>
            <person name="Skelton S."/>
            <person name="Squares S."/>
            <person name="Squares R."/>
            <person name="Sulston J.E."/>
            <person name="Taylor K."/>
            <person name="Whitehead S."/>
            <person name="Barrell B.G."/>
        </authorList>
    </citation>
    <scope>NUCLEOTIDE SEQUENCE [LARGE SCALE GENOMIC DNA]</scope>
    <source>
        <strain>ATCC 25618 / H37Rv</strain>
    </source>
</reference>
<reference key="4">
    <citation type="journal article" date="2011" name="Mol. Cell. Proteomics">
        <title>Proteogenomic analysis of Mycobacterium tuberculosis by high resolution mass spectrometry.</title>
        <authorList>
            <person name="Kelkar D.S."/>
            <person name="Kumar D."/>
            <person name="Kumar P."/>
            <person name="Balakrishnan L."/>
            <person name="Muthusamy B."/>
            <person name="Yadav A.K."/>
            <person name="Shrivastava P."/>
            <person name="Marimuthu A."/>
            <person name="Anand S."/>
            <person name="Sundaram H."/>
            <person name="Kingsbury R."/>
            <person name="Harsha H.C."/>
            <person name="Nair B."/>
            <person name="Prasad T.S."/>
            <person name="Chauhan D.S."/>
            <person name="Katoch K."/>
            <person name="Katoch V.M."/>
            <person name="Kumar P."/>
            <person name="Chaerkady R."/>
            <person name="Ramachandran S."/>
            <person name="Dash D."/>
            <person name="Pandey A."/>
        </authorList>
    </citation>
    <scope>IDENTIFICATION BY MASS SPECTROMETRY [LARGE SCALE ANALYSIS]</scope>
    <source>
        <strain>ATCC 25618 / H37Rv</strain>
    </source>
</reference>
<dbReference type="EC" id="3.5.1.5" evidence="1"/>
<dbReference type="EMBL" id="U33011">
    <property type="protein sequence ID" value="AAC43473.1"/>
    <property type="molecule type" value="Genomic_DNA"/>
</dbReference>
<dbReference type="EMBL" id="L41141">
    <property type="protein sequence ID" value="AAC37005.1"/>
    <property type="molecule type" value="Genomic_DNA"/>
</dbReference>
<dbReference type="EMBL" id="AL123456">
    <property type="protein sequence ID" value="CCP44614.1"/>
    <property type="molecule type" value="Genomic_DNA"/>
</dbReference>
<dbReference type="PIR" id="H70664">
    <property type="entry name" value="H70664"/>
</dbReference>
<dbReference type="RefSeq" id="NP_216364.1">
    <property type="nucleotide sequence ID" value="NC_000962.3"/>
</dbReference>
<dbReference type="RefSeq" id="WP_003409305.1">
    <property type="nucleotide sequence ID" value="NZ_NVQJ01000013.1"/>
</dbReference>
<dbReference type="PDB" id="2FVH">
    <property type="method" value="X-ray"/>
    <property type="resolution" value="1.80 A"/>
    <property type="chains" value="A/B/C=1-100"/>
</dbReference>
<dbReference type="PDBsum" id="2FVH"/>
<dbReference type="SMR" id="P9WFE7"/>
<dbReference type="FunCoup" id="P9WFE7">
    <property type="interactions" value="19"/>
</dbReference>
<dbReference type="STRING" id="83332.Rv1848"/>
<dbReference type="PaxDb" id="83332-Rv1848"/>
<dbReference type="GeneID" id="885414"/>
<dbReference type="KEGG" id="mtu:Rv1848"/>
<dbReference type="KEGG" id="mtv:RVBD_1848"/>
<dbReference type="TubercuList" id="Rv1848"/>
<dbReference type="eggNOG" id="COG0831">
    <property type="taxonomic scope" value="Bacteria"/>
</dbReference>
<dbReference type="InParanoid" id="P9WFE7"/>
<dbReference type="OrthoDB" id="9797217at2"/>
<dbReference type="PhylomeDB" id="P9WFE7"/>
<dbReference type="UniPathway" id="UPA00258">
    <property type="reaction ID" value="UER00370"/>
</dbReference>
<dbReference type="EvolutionaryTrace" id="P9WFE7"/>
<dbReference type="Proteomes" id="UP000001584">
    <property type="component" value="Chromosome"/>
</dbReference>
<dbReference type="GO" id="GO:0005737">
    <property type="term" value="C:cytoplasm"/>
    <property type="evidence" value="ECO:0007669"/>
    <property type="project" value="UniProtKB-SubCell"/>
</dbReference>
<dbReference type="GO" id="GO:0016151">
    <property type="term" value="F:nickel cation binding"/>
    <property type="evidence" value="ECO:0007669"/>
    <property type="project" value="InterPro"/>
</dbReference>
<dbReference type="GO" id="GO:0009039">
    <property type="term" value="F:urease activity"/>
    <property type="evidence" value="ECO:0007669"/>
    <property type="project" value="UniProtKB-UniRule"/>
</dbReference>
<dbReference type="GO" id="GO:0043419">
    <property type="term" value="P:urea catabolic process"/>
    <property type="evidence" value="ECO:0007669"/>
    <property type="project" value="UniProtKB-UniRule"/>
</dbReference>
<dbReference type="CDD" id="cd00390">
    <property type="entry name" value="Urease_gamma"/>
    <property type="match status" value="1"/>
</dbReference>
<dbReference type="FunFam" id="3.30.280.10:FF:000002">
    <property type="entry name" value="Urease subunit gamma"/>
    <property type="match status" value="1"/>
</dbReference>
<dbReference type="Gene3D" id="3.30.280.10">
    <property type="entry name" value="Urease, gamma-like subunit"/>
    <property type="match status" value="1"/>
</dbReference>
<dbReference type="HAMAP" id="MF_00739">
    <property type="entry name" value="Urease_gamma"/>
    <property type="match status" value="1"/>
</dbReference>
<dbReference type="InterPro" id="IPR012010">
    <property type="entry name" value="Urease_gamma"/>
</dbReference>
<dbReference type="InterPro" id="IPR002026">
    <property type="entry name" value="Urease_gamma/gamma-beta_su"/>
</dbReference>
<dbReference type="InterPro" id="IPR036463">
    <property type="entry name" value="Urease_gamma_sf"/>
</dbReference>
<dbReference type="InterPro" id="IPR050069">
    <property type="entry name" value="Urease_subunit"/>
</dbReference>
<dbReference type="NCBIfam" id="NF009712">
    <property type="entry name" value="PRK13241.1"/>
    <property type="match status" value="1"/>
</dbReference>
<dbReference type="NCBIfam" id="TIGR00193">
    <property type="entry name" value="urease_gam"/>
    <property type="match status" value="1"/>
</dbReference>
<dbReference type="PANTHER" id="PTHR33569">
    <property type="entry name" value="UREASE"/>
    <property type="match status" value="1"/>
</dbReference>
<dbReference type="PANTHER" id="PTHR33569:SF1">
    <property type="entry name" value="UREASE"/>
    <property type="match status" value="1"/>
</dbReference>
<dbReference type="Pfam" id="PF00547">
    <property type="entry name" value="Urease_gamma"/>
    <property type="match status" value="1"/>
</dbReference>
<dbReference type="PIRSF" id="PIRSF001223">
    <property type="entry name" value="Urease_gamma"/>
    <property type="match status" value="1"/>
</dbReference>
<dbReference type="SUPFAM" id="SSF54111">
    <property type="entry name" value="Urease, gamma-subunit"/>
    <property type="match status" value="1"/>
</dbReference>
<sequence length="100" mass="11090">MRLTPHEQERLLLSYAAELARRRRARGLRLNHPEAIAVIADHILEGARDGRTVAELMASGREVLGRDDVMEGVPEMLAEVQVEATFPDGTKLVTVHQPIA</sequence>
<organism>
    <name type="scientific">Mycobacterium tuberculosis (strain ATCC 25618 / H37Rv)</name>
    <dbReference type="NCBI Taxonomy" id="83332"/>
    <lineage>
        <taxon>Bacteria</taxon>
        <taxon>Bacillati</taxon>
        <taxon>Actinomycetota</taxon>
        <taxon>Actinomycetes</taxon>
        <taxon>Mycobacteriales</taxon>
        <taxon>Mycobacteriaceae</taxon>
        <taxon>Mycobacterium</taxon>
        <taxon>Mycobacterium tuberculosis complex</taxon>
    </lineage>
</organism>
<comment type="catalytic activity">
    <reaction evidence="1 2">
        <text>urea + 2 H2O + H(+) = hydrogencarbonate + 2 NH4(+)</text>
        <dbReference type="Rhea" id="RHEA:20557"/>
        <dbReference type="ChEBI" id="CHEBI:15377"/>
        <dbReference type="ChEBI" id="CHEBI:15378"/>
        <dbReference type="ChEBI" id="CHEBI:16199"/>
        <dbReference type="ChEBI" id="CHEBI:17544"/>
        <dbReference type="ChEBI" id="CHEBI:28938"/>
        <dbReference type="EC" id="3.5.1.5"/>
    </reaction>
</comment>
<comment type="biophysicochemical properties">
    <kinetics>
        <KM evidence="2">0.3 mM for urea</KM>
        <Vmax evidence="2">0.05 mmol/min/mg enzyme</Vmax>
    </kinetics>
    <phDependence>
        <text evidence="2">Optimum pH is 7.2.</text>
    </phDependence>
</comment>
<comment type="pathway">
    <text evidence="1">Nitrogen metabolism; urea degradation; CO(2) and NH(3) from urea (urease route): step 1/1.</text>
</comment>
<comment type="subunit">
    <text>Heterotrimer of UreA (gamma), UreB (beta) and UreC (alpha) subunits. Three heterotrimers associate to form the active enzyme.</text>
</comment>
<comment type="subcellular location">
    <subcellularLocation>
        <location evidence="1">Cytoplasm</location>
    </subcellularLocation>
</comment>
<comment type="similarity">
    <text evidence="1">Belongs to the urease gamma subunit family.</text>
</comment>
<gene>
    <name evidence="1" type="primary">ureA</name>
    <name type="ordered locus">Rv1848</name>
    <name type="ORF">MTCY359.25c</name>
</gene>